<proteinExistence type="inferred from homology"/>
<gene>
    <name type="primary">rps7</name>
</gene>
<keyword id="KW-0150">Chloroplast</keyword>
<keyword id="KW-0934">Plastid</keyword>
<keyword id="KW-0687">Ribonucleoprotein</keyword>
<keyword id="KW-0689">Ribosomal protein</keyword>
<keyword id="KW-0694">RNA-binding</keyword>
<keyword id="KW-0699">rRNA-binding</keyword>
<feature type="chain" id="PRO_0000124432" description="Small ribosomal subunit protein uS7c">
    <location>
        <begin position="1"/>
        <end position="156"/>
    </location>
</feature>
<accession>Q71L39</accession>
<protein>
    <recommendedName>
        <fullName evidence="2">Small ribosomal subunit protein uS7c</fullName>
    </recommendedName>
    <alternativeName>
        <fullName>30S ribosomal protein S7, chloroplastic</fullName>
    </alternativeName>
</protein>
<reference key="1">
    <citation type="journal article" date="2003" name="Mol. Phylogenet. Evol.">
        <title>Inference of higher-order relationships in the cycads from a large chloroplast data set.</title>
        <authorList>
            <person name="Rai H.S."/>
            <person name="O'Brien H.E."/>
            <person name="Reeves P.A."/>
            <person name="Olmstead R.G."/>
            <person name="Graham S.W."/>
        </authorList>
    </citation>
    <scope>NUCLEOTIDE SEQUENCE [GENOMIC DNA]</scope>
</reference>
<organism>
    <name type="scientific">Bowenia serrulata</name>
    <name type="common">Byfield fern</name>
    <name type="synonym">Bowenia spectabilis var. serrulata</name>
    <dbReference type="NCBI Taxonomy" id="13365"/>
    <lineage>
        <taxon>Eukaryota</taxon>
        <taxon>Viridiplantae</taxon>
        <taxon>Streptophyta</taxon>
        <taxon>Embryophyta</taxon>
        <taxon>Tracheophyta</taxon>
        <taxon>Spermatophyta</taxon>
        <taxon>Cycadidae</taxon>
        <taxon>Cycadales</taxon>
        <taxon>Cycadaceae</taxon>
        <taxon>Bowenia</taxon>
    </lineage>
</organism>
<geneLocation type="chloroplast"/>
<dbReference type="EMBL" id="AF469731">
    <property type="protein sequence ID" value="AAQ05265.1"/>
    <property type="molecule type" value="Genomic_DNA"/>
</dbReference>
<dbReference type="RefSeq" id="YP_009113507.1">
    <property type="nucleotide sequence ID" value="NC_026036.1"/>
</dbReference>
<dbReference type="RefSeq" id="YP_009113524.1">
    <property type="nucleotide sequence ID" value="NC_026036.1"/>
</dbReference>
<dbReference type="SMR" id="Q71L39"/>
<dbReference type="GeneID" id="22831892"/>
<dbReference type="GeneID" id="22832015"/>
<dbReference type="GO" id="GO:0009507">
    <property type="term" value="C:chloroplast"/>
    <property type="evidence" value="ECO:0007669"/>
    <property type="project" value="UniProtKB-SubCell"/>
</dbReference>
<dbReference type="GO" id="GO:0015935">
    <property type="term" value="C:small ribosomal subunit"/>
    <property type="evidence" value="ECO:0007669"/>
    <property type="project" value="InterPro"/>
</dbReference>
<dbReference type="GO" id="GO:0019843">
    <property type="term" value="F:rRNA binding"/>
    <property type="evidence" value="ECO:0007669"/>
    <property type="project" value="UniProtKB-UniRule"/>
</dbReference>
<dbReference type="GO" id="GO:0003735">
    <property type="term" value="F:structural constituent of ribosome"/>
    <property type="evidence" value="ECO:0007669"/>
    <property type="project" value="InterPro"/>
</dbReference>
<dbReference type="GO" id="GO:0006412">
    <property type="term" value="P:translation"/>
    <property type="evidence" value="ECO:0007669"/>
    <property type="project" value="UniProtKB-UniRule"/>
</dbReference>
<dbReference type="CDD" id="cd14871">
    <property type="entry name" value="uS7_Chloroplast"/>
    <property type="match status" value="1"/>
</dbReference>
<dbReference type="FunFam" id="1.10.455.10:FF:000001">
    <property type="entry name" value="30S ribosomal protein S7"/>
    <property type="match status" value="1"/>
</dbReference>
<dbReference type="Gene3D" id="1.10.455.10">
    <property type="entry name" value="Ribosomal protein S7 domain"/>
    <property type="match status" value="1"/>
</dbReference>
<dbReference type="HAMAP" id="MF_00480_B">
    <property type="entry name" value="Ribosomal_uS7_B"/>
    <property type="match status" value="1"/>
</dbReference>
<dbReference type="InterPro" id="IPR000235">
    <property type="entry name" value="Ribosomal_uS7"/>
</dbReference>
<dbReference type="InterPro" id="IPR005717">
    <property type="entry name" value="Ribosomal_uS7_bac/org-type"/>
</dbReference>
<dbReference type="InterPro" id="IPR020606">
    <property type="entry name" value="Ribosomal_uS7_CS"/>
</dbReference>
<dbReference type="InterPro" id="IPR023798">
    <property type="entry name" value="Ribosomal_uS7_dom"/>
</dbReference>
<dbReference type="InterPro" id="IPR036823">
    <property type="entry name" value="Ribosomal_uS7_dom_sf"/>
</dbReference>
<dbReference type="NCBIfam" id="TIGR01029">
    <property type="entry name" value="rpsG_bact"/>
    <property type="match status" value="1"/>
</dbReference>
<dbReference type="PANTHER" id="PTHR11205">
    <property type="entry name" value="RIBOSOMAL PROTEIN S7"/>
    <property type="match status" value="1"/>
</dbReference>
<dbReference type="Pfam" id="PF00177">
    <property type="entry name" value="Ribosomal_S7"/>
    <property type="match status" value="1"/>
</dbReference>
<dbReference type="PIRSF" id="PIRSF002122">
    <property type="entry name" value="RPS7p_RPS7a_RPS5e_RPS7o"/>
    <property type="match status" value="1"/>
</dbReference>
<dbReference type="SUPFAM" id="SSF47973">
    <property type="entry name" value="Ribosomal protein S7"/>
    <property type="match status" value="1"/>
</dbReference>
<dbReference type="PROSITE" id="PS00052">
    <property type="entry name" value="RIBOSOMAL_S7"/>
    <property type="match status" value="1"/>
</dbReference>
<evidence type="ECO:0000250" key="1"/>
<evidence type="ECO:0000305" key="2"/>
<comment type="function">
    <text evidence="1">One of the primary rRNA binding proteins, it binds directly to 16S rRNA where it nucleates assembly of the head domain of the 30S subunit.</text>
</comment>
<comment type="subunit">
    <text>Part of the 30S ribosomal subunit.</text>
</comment>
<comment type="subcellular location">
    <subcellularLocation>
        <location>Plastid</location>
        <location>Chloroplast</location>
    </subcellularLocation>
</comment>
<comment type="similarity">
    <text evidence="2">Belongs to the universal ribosomal protein uS7 family.</text>
</comment>
<name>RR7_BOWSE</name>
<sequence>MSRRSTAEKETAKSDPIYRNRLVNMLVNRILRHGKKSLAYRILYRAMKNIQQKTEKNPLSVLRQAIRGVTPNVTVKARRVGGSTYQVPIEIRSTQGKALAIRWSLGASRKRPPGRNMAFKLSYELMDAARENGNAIRKKEEAHRMAEANRAFAHFR</sequence>